<proteinExistence type="inferred from homology"/>
<organism>
    <name type="scientific">Mycobacterium sp. (strain JLS)</name>
    <dbReference type="NCBI Taxonomy" id="164757"/>
    <lineage>
        <taxon>Bacteria</taxon>
        <taxon>Bacillati</taxon>
        <taxon>Actinomycetota</taxon>
        <taxon>Actinomycetes</taxon>
        <taxon>Mycobacteriales</taxon>
        <taxon>Mycobacteriaceae</taxon>
        <taxon>Mycobacterium</taxon>
    </lineage>
</organism>
<gene>
    <name evidence="1" type="primary">rplD</name>
    <name type="ordered locus">Mjls_1041</name>
</gene>
<dbReference type="EMBL" id="CP000580">
    <property type="protein sequence ID" value="ABN96849.1"/>
    <property type="molecule type" value="Genomic_DNA"/>
</dbReference>
<dbReference type="SMR" id="A3PVC2"/>
<dbReference type="KEGG" id="mjl:Mjls_1041"/>
<dbReference type="HOGENOM" id="CLU_041575_5_0_11"/>
<dbReference type="BioCyc" id="MSP164757:G1G8C-1054-MONOMER"/>
<dbReference type="GO" id="GO:1990904">
    <property type="term" value="C:ribonucleoprotein complex"/>
    <property type="evidence" value="ECO:0007669"/>
    <property type="project" value="UniProtKB-KW"/>
</dbReference>
<dbReference type="GO" id="GO:0005840">
    <property type="term" value="C:ribosome"/>
    <property type="evidence" value="ECO:0007669"/>
    <property type="project" value="UniProtKB-KW"/>
</dbReference>
<dbReference type="GO" id="GO:0019843">
    <property type="term" value="F:rRNA binding"/>
    <property type="evidence" value="ECO:0007669"/>
    <property type="project" value="UniProtKB-UniRule"/>
</dbReference>
<dbReference type="GO" id="GO:0003735">
    <property type="term" value="F:structural constituent of ribosome"/>
    <property type="evidence" value="ECO:0007669"/>
    <property type="project" value="InterPro"/>
</dbReference>
<dbReference type="GO" id="GO:0006412">
    <property type="term" value="P:translation"/>
    <property type="evidence" value="ECO:0007669"/>
    <property type="project" value="UniProtKB-UniRule"/>
</dbReference>
<dbReference type="FunFam" id="3.40.1370.10:FF:000004">
    <property type="entry name" value="50S ribosomal protein L4"/>
    <property type="match status" value="1"/>
</dbReference>
<dbReference type="Gene3D" id="3.40.1370.10">
    <property type="match status" value="1"/>
</dbReference>
<dbReference type="HAMAP" id="MF_01328_B">
    <property type="entry name" value="Ribosomal_uL4_B"/>
    <property type="match status" value="1"/>
</dbReference>
<dbReference type="InterPro" id="IPR002136">
    <property type="entry name" value="Ribosomal_uL4"/>
</dbReference>
<dbReference type="InterPro" id="IPR013005">
    <property type="entry name" value="Ribosomal_uL4-like"/>
</dbReference>
<dbReference type="InterPro" id="IPR023574">
    <property type="entry name" value="Ribosomal_uL4_dom_sf"/>
</dbReference>
<dbReference type="NCBIfam" id="TIGR03953">
    <property type="entry name" value="rplD_bact"/>
    <property type="match status" value="1"/>
</dbReference>
<dbReference type="PANTHER" id="PTHR10746">
    <property type="entry name" value="50S RIBOSOMAL PROTEIN L4"/>
    <property type="match status" value="1"/>
</dbReference>
<dbReference type="PANTHER" id="PTHR10746:SF6">
    <property type="entry name" value="LARGE RIBOSOMAL SUBUNIT PROTEIN UL4M"/>
    <property type="match status" value="1"/>
</dbReference>
<dbReference type="Pfam" id="PF00573">
    <property type="entry name" value="Ribosomal_L4"/>
    <property type="match status" value="1"/>
</dbReference>
<dbReference type="SUPFAM" id="SSF52166">
    <property type="entry name" value="Ribosomal protein L4"/>
    <property type="match status" value="1"/>
</dbReference>
<sequence>MATTIEVKTPAGTTDGSVELPAELFDVEANIALMHQVVTAQLAAKRQGTHSTKTRGEVSGGGKKPYRQKGTGRARQGSTRAPQFTGGGTVHGPQPRDYSQRTPKKMIAAALRGALSDRARNGRIHAVTELVEGQTPSTKSAKAFLSTLTERKQVLVVIGRADETSERSVRNLPGVHIISPDQLNTYDVLKADDVVFSVEALNAYINAQTARTEKEGASA</sequence>
<evidence type="ECO:0000255" key="1">
    <source>
        <dbReference type="HAMAP-Rule" id="MF_01328"/>
    </source>
</evidence>
<evidence type="ECO:0000256" key="2">
    <source>
        <dbReference type="SAM" id="MobiDB-lite"/>
    </source>
</evidence>
<evidence type="ECO:0000305" key="3"/>
<feature type="chain" id="PRO_1000052445" description="Large ribosomal subunit protein uL4">
    <location>
        <begin position="1"/>
        <end position="219"/>
    </location>
</feature>
<feature type="region of interest" description="Disordered" evidence="2">
    <location>
        <begin position="43"/>
        <end position="100"/>
    </location>
</feature>
<protein>
    <recommendedName>
        <fullName evidence="1">Large ribosomal subunit protein uL4</fullName>
    </recommendedName>
    <alternativeName>
        <fullName evidence="3">50S ribosomal protein L4</fullName>
    </alternativeName>
</protein>
<reference key="1">
    <citation type="submission" date="2007-02" db="EMBL/GenBank/DDBJ databases">
        <title>Complete sequence of Mycobacterium sp. JLS.</title>
        <authorList>
            <consortium name="US DOE Joint Genome Institute"/>
            <person name="Copeland A."/>
            <person name="Lucas S."/>
            <person name="Lapidus A."/>
            <person name="Barry K."/>
            <person name="Detter J.C."/>
            <person name="Glavina del Rio T."/>
            <person name="Hammon N."/>
            <person name="Israni S."/>
            <person name="Dalin E."/>
            <person name="Tice H."/>
            <person name="Pitluck S."/>
            <person name="Chain P."/>
            <person name="Malfatti S."/>
            <person name="Shin M."/>
            <person name="Vergez L."/>
            <person name="Schmutz J."/>
            <person name="Larimer F."/>
            <person name="Land M."/>
            <person name="Hauser L."/>
            <person name="Kyrpides N."/>
            <person name="Mikhailova N."/>
            <person name="Miller C.D."/>
            <person name="Anderson A.J."/>
            <person name="Sims R.C."/>
            <person name="Richardson P."/>
        </authorList>
    </citation>
    <scope>NUCLEOTIDE SEQUENCE [LARGE SCALE GENOMIC DNA]</scope>
    <source>
        <strain>JLS</strain>
    </source>
</reference>
<name>RL4_MYCSJ</name>
<accession>A3PVC2</accession>
<keyword id="KW-0687">Ribonucleoprotein</keyword>
<keyword id="KW-0689">Ribosomal protein</keyword>
<keyword id="KW-0694">RNA-binding</keyword>
<keyword id="KW-0699">rRNA-binding</keyword>
<comment type="function">
    <text evidence="1">One of the primary rRNA binding proteins, this protein initially binds near the 5'-end of the 23S rRNA. It is important during the early stages of 50S assembly. It makes multiple contacts with different domains of the 23S rRNA in the assembled 50S subunit and ribosome.</text>
</comment>
<comment type="function">
    <text evidence="1">Forms part of the polypeptide exit tunnel.</text>
</comment>
<comment type="subunit">
    <text evidence="1">Part of the 50S ribosomal subunit.</text>
</comment>
<comment type="similarity">
    <text evidence="1">Belongs to the universal ribosomal protein uL4 family.</text>
</comment>